<reference key="1">
    <citation type="submission" date="2002-12" db="EMBL/GenBank/DDBJ databases">
        <authorList>
            <person name="Da Lage J.-L."/>
        </authorList>
    </citation>
    <scope>NUCLEOTIDE SEQUENCE [GENOMIC DNA]</scope>
</reference>
<organism>
    <name type="scientific">Drosophila ercepeae</name>
    <name type="common">Fruit fly</name>
    <dbReference type="NCBI Taxonomy" id="42063"/>
    <lineage>
        <taxon>Eukaryota</taxon>
        <taxon>Metazoa</taxon>
        <taxon>Ecdysozoa</taxon>
        <taxon>Arthropoda</taxon>
        <taxon>Hexapoda</taxon>
        <taxon>Insecta</taxon>
        <taxon>Pterygota</taxon>
        <taxon>Neoptera</taxon>
        <taxon>Endopterygota</taxon>
        <taxon>Diptera</taxon>
        <taxon>Brachycera</taxon>
        <taxon>Muscomorpha</taxon>
        <taxon>Ephydroidea</taxon>
        <taxon>Drosophilidae</taxon>
        <taxon>Drosophila</taxon>
        <taxon>Sophophora</taxon>
    </lineage>
</organism>
<proteinExistence type="inferred from homology"/>
<gene>
    <name type="primary">Amyrel</name>
</gene>
<dbReference type="EC" id="3.2.1.1" evidence="2"/>
<dbReference type="EMBL" id="U96155">
    <property type="protein sequence ID" value="AAC39105.2"/>
    <property type="molecule type" value="Genomic_DNA"/>
</dbReference>
<dbReference type="SMR" id="O77012"/>
<dbReference type="CAZy" id="GH13">
    <property type="family name" value="Glycoside Hydrolase Family 13"/>
</dbReference>
<dbReference type="GO" id="GO:0005576">
    <property type="term" value="C:extracellular region"/>
    <property type="evidence" value="ECO:0007669"/>
    <property type="project" value="UniProtKB-SubCell"/>
</dbReference>
<dbReference type="GO" id="GO:0004556">
    <property type="term" value="F:alpha-amylase activity"/>
    <property type="evidence" value="ECO:0007669"/>
    <property type="project" value="UniProtKB-EC"/>
</dbReference>
<dbReference type="GO" id="GO:0046872">
    <property type="term" value="F:metal ion binding"/>
    <property type="evidence" value="ECO:0007669"/>
    <property type="project" value="UniProtKB-KW"/>
</dbReference>
<dbReference type="GO" id="GO:0005975">
    <property type="term" value="P:carbohydrate metabolic process"/>
    <property type="evidence" value="ECO:0007669"/>
    <property type="project" value="InterPro"/>
</dbReference>
<dbReference type="CDD" id="cd11317">
    <property type="entry name" value="AmyAc_bac_euk_AmyA"/>
    <property type="match status" value="1"/>
</dbReference>
<dbReference type="FunFam" id="3.20.20.80:FF:000119">
    <property type="entry name" value="Alpha-amylase-related protein"/>
    <property type="match status" value="1"/>
</dbReference>
<dbReference type="FunFam" id="2.60.40.1180:FF:000020">
    <property type="entry name" value="Pancreatic alpha-amylase"/>
    <property type="match status" value="1"/>
</dbReference>
<dbReference type="Gene3D" id="3.20.20.80">
    <property type="entry name" value="Glycosidases"/>
    <property type="match status" value="1"/>
</dbReference>
<dbReference type="Gene3D" id="2.60.40.1180">
    <property type="entry name" value="Golgi alpha-mannosidase II"/>
    <property type="match status" value="1"/>
</dbReference>
<dbReference type="InterPro" id="IPR006048">
    <property type="entry name" value="A-amylase/branching_C"/>
</dbReference>
<dbReference type="InterPro" id="IPR031319">
    <property type="entry name" value="A-amylase_C"/>
</dbReference>
<dbReference type="InterPro" id="IPR006046">
    <property type="entry name" value="Alpha_amylase"/>
</dbReference>
<dbReference type="InterPro" id="IPR006047">
    <property type="entry name" value="Glyco_hydro_13_cat_dom"/>
</dbReference>
<dbReference type="InterPro" id="IPR013780">
    <property type="entry name" value="Glyco_hydro_b"/>
</dbReference>
<dbReference type="InterPro" id="IPR017853">
    <property type="entry name" value="Glycoside_hydrolase_SF"/>
</dbReference>
<dbReference type="PANTHER" id="PTHR43447">
    <property type="entry name" value="ALPHA-AMYLASE"/>
    <property type="match status" value="1"/>
</dbReference>
<dbReference type="Pfam" id="PF00128">
    <property type="entry name" value="Alpha-amylase"/>
    <property type="match status" value="1"/>
</dbReference>
<dbReference type="Pfam" id="PF02806">
    <property type="entry name" value="Alpha-amylase_C"/>
    <property type="match status" value="1"/>
</dbReference>
<dbReference type="PRINTS" id="PR00110">
    <property type="entry name" value="ALPHAAMYLASE"/>
</dbReference>
<dbReference type="SMART" id="SM00642">
    <property type="entry name" value="Aamy"/>
    <property type="match status" value="1"/>
</dbReference>
<dbReference type="SMART" id="SM00632">
    <property type="entry name" value="Aamy_C"/>
    <property type="match status" value="1"/>
</dbReference>
<dbReference type="SUPFAM" id="SSF51445">
    <property type="entry name" value="(Trans)glycosidases"/>
    <property type="match status" value="1"/>
</dbReference>
<dbReference type="SUPFAM" id="SSF51011">
    <property type="entry name" value="Glycosyl hydrolase domain"/>
    <property type="match status" value="1"/>
</dbReference>
<sequence>MFKFASAVILCLVAASSTQAQHNPHWWGNRNTIVHLFEWKWSDIAAECENFLGPQGFAGVQVSPVNENIISPGRPWWERYQPISYKLTTRSGDEQEFGDMVRRCNDVGIRIYVDVLLNHMSGDFDGIALGTAGSETEPSTKSFPGVPYTAQDFHPSCEITDWNDRFQVQQCELVGLKDLDQSSDWVRSKLIEFLDHLIELGVAGFRVDAAKHMAADDLSYIYSSLSDLNIEHGFPHNARPFIFQEVIDHGHETVSRDEYNQLGAVTEFRFSEEIGNAFRGNNALKWLQSWGTGWGFLPSGQALTFVDNHDNQRDMGAVLNYKSPKQYKMATAFHLAYPYGISRVMSSFAFDDHDTAPPQDEQEKIISPEFDEEGGCVNGWICEHRWRQIYAMVGFKNAVRDTEISDWWDNGDNQISFCRGNKGFLAVNNNLYDLSQELQTCLPAGVYCDVISGSLVDGSCTGKSVTVDNNGYGYIHIGSDEFDGALALHVDAKI</sequence>
<name>AMYR_DROEC</name>
<protein>
    <recommendedName>
        <fullName>Alpha-amylase-related protein</fullName>
        <ecNumber evidence="2">3.2.1.1</ecNumber>
    </recommendedName>
</protein>
<evidence type="ECO:0000250" key="1"/>
<evidence type="ECO:0000250" key="2">
    <source>
        <dbReference type="UniProtKB" id="P04746"/>
    </source>
</evidence>
<evidence type="ECO:0000250" key="3">
    <source>
        <dbReference type="UniProtKB" id="P56634"/>
    </source>
</evidence>
<evidence type="ECO:0000255" key="4"/>
<evidence type="ECO:0000305" key="5"/>
<comment type="catalytic activity">
    <reaction evidence="2">
        <text>Endohydrolysis of (1-&gt;4)-alpha-D-glucosidic linkages in polysaccharides containing three or more (1-&gt;4)-alpha-linked D-glucose units.</text>
        <dbReference type="EC" id="3.2.1.1"/>
    </reaction>
</comment>
<comment type="cofactor">
    <cofactor evidence="3">
        <name>Ca(2+)</name>
        <dbReference type="ChEBI" id="CHEBI:29108"/>
    </cofactor>
    <text evidence="3">Binds 1 Ca(2+) ion per subunit.</text>
</comment>
<comment type="cofactor">
    <cofactor evidence="3">
        <name>chloride</name>
        <dbReference type="ChEBI" id="CHEBI:17996"/>
    </cofactor>
    <text evidence="3">Binds 1 Cl(-) ion per subunit.</text>
</comment>
<comment type="subunit">
    <text evidence="1">Monomer.</text>
</comment>
<comment type="subcellular location">
    <subcellularLocation>
        <location evidence="5">Secreted</location>
    </subcellularLocation>
</comment>
<comment type="similarity">
    <text evidence="5">Belongs to the glycosyl hydrolase 13 family.</text>
</comment>
<keyword id="KW-0106">Calcium</keyword>
<keyword id="KW-0119">Carbohydrate metabolism</keyword>
<keyword id="KW-0868">Chloride</keyword>
<keyword id="KW-1015">Disulfide bond</keyword>
<keyword id="KW-0326">Glycosidase</keyword>
<keyword id="KW-0378">Hydrolase</keyword>
<keyword id="KW-0479">Metal-binding</keyword>
<keyword id="KW-0873">Pyrrolidone carboxylic acid</keyword>
<keyword id="KW-0964">Secreted</keyword>
<keyword id="KW-0732">Signal</keyword>
<accession>O77012</accession>
<feature type="signal peptide" evidence="1">
    <location>
        <begin position="1"/>
        <end position="20"/>
    </location>
</feature>
<feature type="chain" id="PRO_0000001375" description="Alpha-amylase-related protein">
    <location>
        <begin position="21"/>
        <end position="494"/>
    </location>
</feature>
<feature type="active site" description="Nucleophile" evidence="2">
    <location>
        <position position="208"/>
    </location>
</feature>
<feature type="active site" description="Proton donor" evidence="2">
    <location>
        <position position="245"/>
    </location>
</feature>
<feature type="binding site" evidence="3">
    <location>
        <position position="118"/>
    </location>
    <ligand>
        <name>Ca(2+)</name>
        <dbReference type="ChEBI" id="CHEBI:29108"/>
    </ligand>
</feature>
<feature type="binding site" evidence="3">
    <location>
        <position position="169"/>
    </location>
    <ligand>
        <name>Ca(2+)</name>
        <dbReference type="ChEBI" id="CHEBI:29108"/>
    </ligand>
</feature>
<feature type="binding site" evidence="3">
    <location>
        <position position="178"/>
    </location>
    <ligand>
        <name>Ca(2+)</name>
        <dbReference type="ChEBI" id="CHEBI:29108"/>
    </ligand>
</feature>
<feature type="binding site" evidence="3">
    <location>
        <position position="206"/>
    </location>
    <ligand>
        <name>chloride</name>
        <dbReference type="ChEBI" id="CHEBI:17996"/>
    </ligand>
</feature>
<feature type="binding site" evidence="3">
    <location>
        <position position="212"/>
    </location>
    <ligand>
        <name>Ca(2+)</name>
        <dbReference type="ChEBI" id="CHEBI:29108"/>
    </ligand>
</feature>
<feature type="binding site" evidence="3">
    <location>
        <position position="308"/>
    </location>
    <ligand>
        <name>chloride</name>
        <dbReference type="ChEBI" id="CHEBI:17996"/>
    </ligand>
</feature>
<feature type="binding site" evidence="3">
    <location>
        <position position="343"/>
    </location>
    <ligand>
        <name>chloride</name>
        <dbReference type="ChEBI" id="CHEBI:17996"/>
    </ligand>
</feature>
<feature type="site" description="Transition state stabilizer" evidence="2">
    <location>
        <position position="310"/>
    </location>
</feature>
<feature type="modified residue" description="Pyrrolidone carboxylic acid" evidence="1">
    <location>
        <position position="21"/>
    </location>
</feature>
<feature type="disulfide bond" evidence="3">
    <location>
        <begin position="48"/>
        <end position="104"/>
    </location>
</feature>
<feature type="disulfide bond" evidence="3">
    <location>
        <begin position="157"/>
        <end position="171"/>
    </location>
</feature>
<feature type="disulfide bond" evidence="3">
    <location>
        <begin position="376"/>
        <end position="382"/>
    </location>
</feature>
<feature type="disulfide bond" evidence="4">
    <location>
        <begin position="418"/>
        <end position="441"/>
    </location>
</feature>
<feature type="disulfide bond" evidence="3">
    <location>
        <begin position="448"/>
        <end position="460"/>
    </location>
</feature>